<protein>
    <recommendedName>
        <fullName evidence="1">Single-stranded DNA-binding protein</fullName>
        <shortName evidence="1">SSB</shortName>
    </recommendedName>
</protein>
<sequence>MAGETTITVIGNLTNDPELRFTPSGSAVANFTIASTPRTFDRQASEWKDGETLFLRASVWREMAENVAGSLTKGTRVIASGRLKSRSYETKEGDNRTVVELEVDEIGPSLRYANARVNRTQRSGNQNTRRTGDGSPGDAGQTASRDDPWAVNSPANAGSRSDGTDTEPPF</sequence>
<reference key="1">
    <citation type="journal article" date="2003" name="J. Bacteriol.">
        <title>Sequence of the 165-kilobase catabolic plasmid pAO1 from Arthrobacter nicotinovorans and identification of a pAO1-dependent nicotine uptake system.</title>
        <authorList>
            <person name="Igloi G.L."/>
            <person name="Brandsch R."/>
        </authorList>
    </citation>
    <scope>NUCLEOTIDE SEQUENCE [GENOMIC DNA]</scope>
</reference>
<organism>
    <name type="scientific">Paenarthrobacter nicotinovorans</name>
    <name type="common">Arthrobacter nicotinovorans</name>
    <dbReference type="NCBI Taxonomy" id="29320"/>
    <lineage>
        <taxon>Bacteria</taxon>
        <taxon>Bacillati</taxon>
        <taxon>Actinomycetota</taxon>
        <taxon>Actinomycetes</taxon>
        <taxon>Micrococcales</taxon>
        <taxon>Micrococcaceae</taxon>
        <taxon>Paenarthrobacter</taxon>
    </lineage>
</organism>
<dbReference type="EMBL" id="AJ507836">
    <property type="protein sequence ID" value="CAD47869.1"/>
    <property type="molecule type" value="Genomic_DNA"/>
</dbReference>
<dbReference type="RefSeq" id="YP_007988695.1">
    <property type="nucleotide sequence ID" value="NC_021229.1"/>
</dbReference>
<dbReference type="SMR" id="Q8GAN5"/>
<dbReference type="GO" id="GO:0009295">
    <property type="term" value="C:nucleoid"/>
    <property type="evidence" value="ECO:0007669"/>
    <property type="project" value="TreeGrafter"/>
</dbReference>
<dbReference type="GO" id="GO:0003697">
    <property type="term" value="F:single-stranded DNA binding"/>
    <property type="evidence" value="ECO:0007669"/>
    <property type="project" value="UniProtKB-UniRule"/>
</dbReference>
<dbReference type="GO" id="GO:0006260">
    <property type="term" value="P:DNA replication"/>
    <property type="evidence" value="ECO:0007669"/>
    <property type="project" value="InterPro"/>
</dbReference>
<dbReference type="CDD" id="cd04496">
    <property type="entry name" value="SSB_OBF"/>
    <property type="match status" value="1"/>
</dbReference>
<dbReference type="Gene3D" id="2.40.50.140">
    <property type="entry name" value="Nucleic acid-binding proteins"/>
    <property type="match status" value="1"/>
</dbReference>
<dbReference type="HAMAP" id="MF_00984">
    <property type="entry name" value="SSB"/>
    <property type="match status" value="1"/>
</dbReference>
<dbReference type="InterPro" id="IPR012340">
    <property type="entry name" value="NA-bd_OB-fold"/>
</dbReference>
<dbReference type="InterPro" id="IPR000424">
    <property type="entry name" value="Primosome_PriB/ssb"/>
</dbReference>
<dbReference type="InterPro" id="IPR011344">
    <property type="entry name" value="ssDNA-bd"/>
</dbReference>
<dbReference type="NCBIfam" id="NF005851">
    <property type="entry name" value="PRK07772.1"/>
    <property type="match status" value="1"/>
</dbReference>
<dbReference type="NCBIfam" id="TIGR00621">
    <property type="entry name" value="ssb"/>
    <property type="match status" value="1"/>
</dbReference>
<dbReference type="PANTHER" id="PTHR10302">
    <property type="entry name" value="SINGLE-STRANDED DNA-BINDING PROTEIN"/>
    <property type="match status" value="1"/>
</dbReference>
<dbReference type="PANTHER" id="PTHR10302:SF27">
    <property type="entry name" value="SINGLE-STRANDED DNA-BINDING PROTEIN"/>
    <property type="match status" value="1"/>
</dbReference>
<dbReference type="Pfam" id="PF00436">
    <property type="entry name" value="SSB"/>
    <property type="match status" value="1"/>
</dbReference>
<dbReference type="PIRSF" id="PIRSF002070">
    <property type="entry name" value="SSB"/>
    <property type="match status" value="1"/>
</dbReference>
<dbReference type="SUPFAM" id="SSF50249">
    <property type="entry name" value="Nucleic acid-binding proteins"/>
    <property type="match status" value="1"/>
</dbReference>
<dbReference type="PROSITE" id="PS50935">
    <property type="entry name" value="SSB"/>
    <property type="match status" value="1"/>
</dbReference>
<evidence type="ECO:0000255" key="1">
    <source>
        <dbReference type="HAMAP-Rule" id="MF_00984"/>
    </source>
</evidence>
<evidence type="ECO:0000256" key="2">
    <source>
        <dbReference type="SAM" id="MobiDB-lite"/>
    </source>
</evidence>
<accession>Q8GAN5</accession>
<geneLocation type="plasmid">
    <name>pAO1</name>
</geneLocation>
<keyword id="KW-0238">DNA-binding</keyword>
<keyword id="KW-0614">Plasmid</keyword>
<proteinExistence type="inferred from homology"/>
<gene>
    <name type="primary">ssb</name>
</gene>
<feature type="chain" id="PRO_0000096001" description="Single-stranded DNA-binding protein">
    <location>
        <begin position="1"/>
        <end position="170"/>
    </location>
</feature>
<feature type="domain" description="SSB" evidence="1">
    <location>
        <begin position="1"/>
        <end position="110"/>
    </location>
</feature>
<feature type="region of interest" description="Disordered" evidence="2">
    <location>
        <begin position="113"/>
        <end position="170"/>
    </location>
</feature>
<feature type="compositionally biased region" description="Polar residues" evidence="2">
    <location>
        <begin position="117"/>
        <end position="129"/>
    </location>
</feature>
<comment type="subunit">
    <text evidence="1">Homotetramer.</text>
</comment>
<name>SSB_PAENI</name>